<organism>
    <name type="scientific">Pseudomonas fluorescens (strain ATCC BAA-477 / NRRL B-23932 / Pf-5)</name>
    <dbReference type="NCBI Taxonomy" id="220664"/>
    <lineage>
        <taxon>Bacteria</taxon>
        <taxon>Pseudomonadati</taxon>
        <taxon>Pseudomonadota</taxon>
        <taxon>Gammaproteobacteria</taxon>
        <taxon>Pseudomonadales</taxon>
        <taxon>Pseudomonadaceae</taxon>
        <taxon>Pseudomonas</taxon>
    </lineage>
</organism>
<keyword id="KW-0711">Selenium</keyword>
<keyword id="KW-0808">Transferase</keyword>
<feature type="chain" id="PRO_0000210865" description="tRNA 2-selenouridine synthase">
    <location>
        <begin position="1"/>
        <end position="364"/>
    </location>
</feature>
<feature type="domain" description="Rhodanese" evidence="1">
    <location>
        <begin position="12"/>
        <end position="135"/>
    </location>
</feature>
<feature type="active site" description="S-selanylcysteine intermediate" evidence="1">
    <location>
        <position position="95"/>
    </location>
</feature>
<proteinExistence type="inferred from homology"/>
<gene>
    <name evidence="1" type="primary">selU</name>
    <name type="ordered locus">PFL_2279</name>
</gene>
<evidence type="ECO:0000255" key="1">
    <source>
        <dbReference type="HAMAP-Rule" id="MF_01622"/>
    </source>
</evidence>
<comment type="function">
    <text evidence="1">Involved in the post-transcriptional modification of the uridine at the wobble position (U34) of tRNA(Lys), tRNA(Glu) and tRNA(Gln). Catalyzes the conversion of 2-thiouridine (S2U-RNA) to 2-selenouridine (Se2U-RNA). Acts in a two-step process involving geranylation of 2-thiouridine (S2U) to S-geranyl-2-thiouridine (geS2U) and subsequent selenation of the latter derivative to 2-selenouridine (Se2U) in the tRNA chain.</text>
</comment>
<comment type="catalytic activity">
    <reaction evidence="1">
        <text>5-methylaminomethyl-2-thiouridine(34) in tRNA + selenophosphate + (2E)-geranyl diphosphate + H2O + H(+) = 5-methylaminomethyl-2-selenouridine(34) in tRNA + (2E)-thiogeraniol + phosphate + diphosphate</text>
        <dbReference type="Rhea" id="RHEA:42716"/>
        <dbReference type="Rhea" id="RHEA-COMP:10195"/>
        <dbReference type="Rhea" id="RHEA-COMP:10196"/>
        <dbReference type="ChEBI" id="CHEBI:15377"/>
        <dbReference type="ChEBI" id="CHEBI:15378"/>
        <dbReference type="ChEBI" id="CHEBI:16144"/>
        <dbReference type="ChEBI" id="CHEBI:33019"/>
        <dbReference type="ChEBI" id="CHEBI:43474"/>
        <dbReference type="ChEBI" id="CHEBI:58057"/>
        <dbReference type="ChEBI" id="CHEBI:74455"/>
        <dbReference type="ChEBI" id="CHEBI:82743"/>
        <dbReference type="ChEBI" id="CHEBI:143703"/>
        <dbReference type="EC" id="2.9.1.3"/>
    </reaction>
    <physiologicalReaction direction="left-to-right" evidence="1">
        <dbReference type="Rhea" id="RHEA:42717"/>
    </physiologicalReaction>
</comment>
<comment type="catalytic activity">
    <reaction evidence="1">
        <text>5-methylaminomethyl-2-thiouridine(34) in tRNA + (2E)-geranyl diphosphate = 5-methylaminomethyl-S-(2E)-geranyl-thiouridine(34) in tRNA + diphosphate</text>
        <dbReference type="Rhea" id="RHEA:14085"/>
        <dbReference type="Rhea" id="RHEA-COMP:10195"/>
        <dbReference type="Rhea" id="RHEA-COMP:14654"/>
        <dbReference type="ChEBI" id="CHEBI:33019"/>
        <dbReference type="ChEBI" id="CHEBI:58057"/>
        <dbReference type="ChEBI" id="CHEBI:74455"/>
        <dbReference type="ChEBI" id="CHEBI:140632"/>
    </reaction>
    <physiologicalReaction direction="left-to-right" evidence="1">
        <dbReference type="Rhea" id="RHEA:14086"/>
    </physiologicalReaction>
</comment>
<comment type="catalytic activity">
    <reaction evidence="1">
        <text>5-methylaminomethyl-S-(2E)-geranyl-thiouridine(34) in tRNA + selenophosphate + H(+) = 5-methylaminomethyl-2-(Se-phospho)selenouridine(34) in tRNA + (2E)-thiogeraniol</text>
        <dbReference type="Rhea" id="RHEA:60172"/>
        <dbReference type="Rhea" id="RHEA-COMP:14654"/>
        <dbReference type="Rhea" id="RHEA-COMP:15523"/>
        <dbReference type="ChEBI" id="CHEBI:15378"/>
        <dbReference type="ChEBI" id="CHEBI:16144"/>
        <dbReference type="ChEBI" id="CHEBI:140632"/>
        <dbReference type="ChEBI" id="CHEBI:143702"/>
        <dbReference type="ChEBI" id="CHEBI:143703"/>
    </reaction>
    <physiologicalReaction direction="left-to-right" evidence="1">
        <dbReference type="Rhea" id="RHEA:60173"/>
    </physiologicalReaction>
</comment>
<comment type="catalytic activity">
    <reaction evidence="1">
        <text>5-methylaminomethyl-2-(Se-phospho)selenouridine(34) in tRNA + H2O = 5-methylaminomethyl-2-selenouridine(34) in tRNA + phosphate</text>
        <dbReference type="Rhea" id="RHEA:60176"/>
        <dbReference type="Rhea" id="RHEA-COMP:10196"/>
        <dbReference type="Rhea" id="RHEA-COMP:15523"/>
        <dbReference type="ChEBI" id="CHEBI:15377"/>
        <dbReference type="ChEBI" id="CHEBI:43474"/>
        <dbReference type="ChEBI" id="CHEBI:82743"/>
        <dbReference type="ChEBI" id="CHEBI:143702"/>
    </reaction>
    <physiologicalReaction direction="left-to-right" evidence="1">
        <dbReference type="Rhea" id="RHEA:60177"/>
    </physiologicalReaction>
</comment>
<comment type="subunit">
    <text evidence="1">Monomer.</text>
</comment>
<comment type="similarity">
    <text evidence="1">Belongs to the SelU family.</text>
</comment>
<name>SELU_PSEF5</name>
<dbReference type="EC" id="2.9.1.3" evidence="1"/>
<dbReference type="EMBL" id="CP000076">
    <property type="protein sequence ID" value="AAY91552.1"/>
    <property type="molecule type" value="Genomic_DNA"/>
</dbReference>
<dbReference type="RefSeq" id="WP_011060577.1">
    <property type="nucleotide sequence ID" value="NC_004129.6"/>
</dbReference>
<dbReference type="SMR" id="Q4KEE7"/>
<dbReference type="STRING" id="220664.PFL_2279"/>
<dbReference type="KEGG" id="pfl:PFL_2279"/>
<dbReference type="PATRIC" id="fig|220664.5.peg.2318"/>
<dbReference type="eggNOG" id="COG2603">
    <property type="taxonomic scope" value="Bacteria"/>
</dbReference>
<dbReference type="HOGENOM" id="CLU_043456_1_0_6"/>
<dbReference type="Proteomes" id="UP000008540">
    <property type="component" value="Chromosome"/>
</dbReference>
<dbReference type="GO" id="GO:0016765">
    <property type="term" value="F:transferase activity, transferring alkyl or aryl (other than methyl) groups"/>
    <property type="evidence" value="ECO:0007669"/>
    <property type="project" value="UniProtKB-UniRule"/>
</dbReference>
<dbReference type="GO" id="GO:0043828">
    <property type="term" value="F:tRNA 2-selenouridine synthase activity"/>
    <property type="evidence" value="ECO:0007669"/>
    <property type="project" value="UniProtKB-EC"/>
</dbReference>
<dbReference type="GO" id="GO:0002098">
    <property type="term" value="P:tRNA wobble uridine modification"/>
    <property type="evidence" value="ECO:0007669"/>
    <property type="project" value="UniProtKB-UniRule"/>
</dbReference>
<dbReference type="CDD" id="cd01520">
    <property type="entry name" value="RHOD_YbbB"/>
    <property type="match status" value="1"/>
</dbReference>
<dbReference type="Gene3D" id="3.40.250.10">
    <property type="entry name" value="Rhodanese-like domain"/>
    <property type="match status" value="1"/>
</dbReference>
<dbReference type="HAMAP" id="MF_01622">
    <property type="entry name" value="tRNA_sel_U_synth"/>
    <property type="match status" value="1"/>
</dbReference>
<dbReference type="InterPro" id="IPR001763">
    <property type="entry name" value="Rhodanese-like_dom"/>
</dbReference>
<dbReference type="InterPro" id="IPR036873">
    <property type="entry name" value="Rhodanese-like_dom_sf"/>
</dbReference>
<dbReference type="InterPro" id="IPR017582">
    <property type="entry name" value="SelU"/>
</dbReference>
<dbReference type="NCBIfam" id="NF008750">
    <property type="entry name" value="PRK11784.1-2"/>
    <property type="match status" value="1"/>
</dbReference>
<dbReference type="NCBIfam" id="NF008751">
    <property type="entry name" value="PRK11784.1-3"/>
    <property type="match status" value="1"/>
</dbReference>
<dbReference type="NCBIfam" id="TIGR03167">
    <property type="entry name" value="tRNA_sel_U_synt"/>
    <property type="match status" value="1"/>
</dbReference>
<dbReference type="PANTHER" id="PTHR30401">
    <property type="entry name" value="TRNA 2-SELENOURIDINE SYNTHASE"/>
    <property type="match status" value="1"/>
</dbReference>
<dbReference type="PANTHER" id="PTHR30401:SF0">
    <property type="entry name" value="TRNA 2-SELENOURIDINE SYNTHASE"/>
    <property type="match status" value="1"/>
</dbReference>
<dbReference type="SUPFAM" id="SSF52821">
    <property type="entry name" value="Rhodanese/Cell cycle control phosphatase"/>
    <property type="match status" value="1"/>
</dbReference>
<dbReference type="PROSITE" id="PS50206">
    <property type="entry name" value="RHODANESE_3"/>
    <property type="match status" value="1"/>
</dbReference>
<sequence>MPLDCTDYREIFLNDRPMMDTRAPIEFTKGAFPGVLNLPLMTDQERQRVGTCYKQQGQQAAIVLGHQLVSGAIKEQRIQAWADFARAHPDGLLYCFRGGLRSQIVQQWLREAGIDYPRVGGGYKAMRTFLLDTTEQALQQCDFVLLGGMTGTGKTQVLGQLDNALDLEGHANHRGSSFGRRATGQPSNIDFENRLAVDLLKKRERGVQSFVLEDENRMIGSCALPLPLYQSMQGLPMVWLEDSLANRVQRILDDYVVNLCAEFVAVHGEQGFALFAERLLESLNKIHKRLGGERHQRLFLLMEAALAEQARSGDVERHRAWIEGLLGEYYDPMYAFQRESKGARIEFSGEHGAVLDYLRQRSPR</sequence>
<protein>
    <recommendedName>
        <fullName evidence="1">tRNA 2-selenouridine synthase</fullName>
        <ecNumber evidence="1">2.9.1.3</ecNumber>
    </recommendedName>
</protein>
<accession>Q4KEE7</accession>
<reference key="1">
    <citation type="journal article" date="2005" name="Nat. Biotechnol.">
        <title>Complete genome sequence of the plant commensal Pseudomonas fluorescens Pf-5.</title>
        <authorList>
            <person name="Paulsen I.T."/>
            <person name="Press C.M."/>
            <person name="Ravel J."/>
            <person name="Kobayashi D.Y."/>
            <person name="Myers G.S.A."/>
            <person name="Mavrodi D.V."/>
            <person name="DeBoy R.T."/>
            <person name="Seshadri R."/>
            <person name="Ren Q."/>
            <person name="Madupu R."/>
            <person name="Dodson R.J."/>
            <person name="Durkin A.S."/>
            <person name="Brinkac L.M."/>
            <person name="Daugherty S.C."/>
            <person name="Sullivan S.A."/>
            <person name="Rosovitz M.J."/>
            <person name="Gwinn M.L."/>
            <person name="Zhou L."/>
            <person name="Schneider D.J."/>
            <person name="Cartinhour S.W."/>
            <person name="Nelson W.C."/>
            <person name="Weidman J."/>
            <person name="Watkins K."/>
            <person name="Tran K."/>
            <person name="Khouri H."/>
            <person name="Pierson E.A."/>
            <person name="Pierson L.S. III"/>
            <person name="Thomashow L.S."/>
            <person name="Loper J.E."/>
        </authorList>
    </citation>
    <scope>NUCLEOTIDE SEQUENCE [LARGE SCALE GENOMIC DNA]</scope>
    <source>
        <strain>ATCC BAA-477 / NRRL B-23932 / Pf-5</strain>
    </source>
</reference>